<reference key="1">
    <citation type="journal article" date="2004" name="Curr. Genet.">
        <title>Structural features and transcript-editing analysis of sugarcane (Saccharum officinarum L.) chloroplast genome.</title>
        <authorList>
            <person name="Calsa T. Jr."/>
            <person name="Carraro D.M."/>
            <person name="Benatti M.R."/>
            <person name="Barbosa A.C."/>
            <person name="Kitajima J.P."/>
            <person name="Carrer H."/>
        </authorList>
    </citation>
    <scope>NUCLEOTIDE SEQUENCE [LARGE SCALE GENOMIC DNA]</scope>
    <source>
        <strain>cv. SP-80-3280</strain>
    </source>
</reference>
<evidence type="ECO:0000250" key="1"/>
<evidence type="ECO:0000305" key="2"/>
<dbReference type="EMBL" id="AE009947">
    <property type="protein sequence ID" value="AAT44660.1"/>
    <property type="molecule type" value="Genomic_DNA"/>
</dbReference>
<dbReference type="EMBL" id="AE009947">
    <property type="protein sequence ID" value="AAT44649.1"/>
    <property type="molecule type" value="Genomic_DNA"/>
</dbReference>
<dbReference type="SMR" id="Q6L3D3"/>
<dbReference type="GO" id="GO:0009507">
    <property type="term" value="C:chloroplast"/>
    <property type="evidence" value="ECO:0007669"/>
    <property type="project" value="UniProtKB-SubCell"/>
</dbReference>
<dbReference type="GO" id="GO:1990904">
    <property type="term" value="C:ribonucleoprotein complex"/>
    <property type="evidence" value="ECO:0007669"/>
    <property type="project" value="UniProtKB-KW"/>
</dbReference>
<dbReference type="GO" id="GO:0005840">
    <property type="term" value="C:ribosome"/>
    <property type="evidence" value="ECO:0007669"/>
    <property type="project" value="UniProtKB-KW"/>
</dbReference>
<dbReference type="GO" id="GO:0003735">
    <property type="term" value="F:structural constituent of ribosome"/>
    <property type="evidence" value="ECO:0007669"/>
    <property type="project" value="InterPro"/>
</dbReference>
<dbReference type="GO" id="GO:0006412">
    <property type="term" value="P:translation"/>
    <property type="evidence" value="ECO:0007669"/>
    <property type="project" value="UniProtKB-UniRule"/>
</dbReference>
<dbReference type="CDD" id="cd00353">
    <property type="entry name" value="Ribosomal_S15p_S13e"/>
    <property type="match status" value="1"/>
</dbReference>
<dbReference type="Gene3D" id="1.10.287.10">
    <property type="entry name" value="S15/NS1, RNA-binding"/>
    <property type="match status" value="1"/>
</dbReference>
<dbReference type="HAMAP" id="MF_01343_B">
    <property type="entry name" value="Ribosomal_uS15_B"/>
    <property type="match status" value="1"/>
</dbReference>
<dbReference type="InterPro" id="IPR000589">
    <property type="entry name" value="Ribosomal_uS15"/>
</dbReference>
<dbReference type="InterPro" id="IPR005290">
    <property type="entry name" value="Ribosomal_uS15_bac-type"/>
</dbReference>
<dbReference type="InterPro" id="IPR009068">
    <property type="entry name" value="uS15_NS1_RNA-bd_sf"/>
</dbReference>
<dbReference type="NCBIfam" id="TIGR00952">
    <property type="entry name" value="S15_bact"/>
    <property type="match status" value="1"/>
</dbReference>
<dbReference type="PANTHER" id="PTHR23321">
    <property type="entry name" value="RIBOSOMAL PROTEIN S15, BACTERIAL AND ORGANELLAR"/>
    <property type="match status" value="1"/>
</dbReference>
<dbReference type="PANTHER" id="PTHR23321:SF26">
    <property type="entry name" value="SMALL RIBOSOMAL SUBUNIT PROTEIN US15M"/>
    <property type="match status" value="1"/>
</dbReference>
<dbReference type="Pfam" id="PF00312">
    <property type="entry name" value="Ribosomal_S15"/>
    <property type="match status" value="1"/>
</dbReference>
<dbReference type="SMART" id="SM01387">
    <property type="entry name" value="Ribosomal_S15"/>
    <property type="match status" value="1"/>
</dbReference>
<dbReference type="SUPFAM" id="SSF47060">
    <property type="entry name" value="S15/NS1 RNA-binding domain"/>
    <property type="match status" value="1"/>
</dbReference>
<dbReference type="PROSITE" id="PS00362">
    <property type="entry name" value="RIBOSOMAL_S15"/>
    <property type="match status" value="1"/>
</dbReference>
<geneLocation type="chloroplast"/>
<proteinExistence type="inferred from homology"/>
<keyword id="KW-0150">Chloroplast</keyword>
<keyword id="KW-0934">Plastid</keyword>
<keyword id="KW-0687">Ribonucleoprotein</keyword>
<keyword id="KW-0689">Ribosomal protein</keyword>
<name>RR15_SACHY</name>
<protein>
    <recommendedName>
        <fullName evidence="2">Small ribosomal subunit protein uS15c</fullName>
    </recommendedName>
    <alternativeName>
        <fullName>30S ribosomal protein S15, chloroplastic</fullName>
    </alternativeName>
</protein>
<accession>Q6L3D3</accession>
<feature type="chain" id="PRO_0000115650" description="Small ribosomal subunit protein uS15c">
    <location>
        <begin position="1"/>
        <end position="78"/>
    </location>
</feature>
<gene>
    <name type="primary">rps15-A</name>
    <name type="ordered locus">PS037</name>
</gene>
<gene>
    <name type="primary">rps15-B</name>
    <name type="ordered locus">PS049</name>
</gene>
<organism>
    <name type="scientific">Saccharum hybrid</name>
    <name type="common">Sugarcane</name>
    <dbReference type="NCBI Taxonomy" id="15819"/>
    <lineage>
        <taxon>Eukaryota</taxon>
        <taxon>Viridiplantae</taxon>
        <taxon>Streptophyta</taxon>
        <taxon>Embryophyta</taxon>
        <taxon>Tracheophyta</taxon>
        <taxon>Spermatophyta</taxon>
        <taxon>Magnoliopsida</taxon>
        <taxon>Liliopsida</taxon>
        <taxon>Poales</taxon>
        <taxon>Poaceae</taxon>
        <taxon>PACMAD clade</taxon>
        <taxon>Panicoideae</taxon>
        <taxon>Andropogonodae</taxon>
        <taxon>Andropogoneae</taxon>
        <taxon>Saccharinae</taxon>
        <taxon>Saccharum</taxon>
    </lineage>
</organism>
<sequence>MVKEEKQENRGSVEFQVFSFTNKIRRLASHLELHKKDFSSERGLRRLLGKRQRLLAYLAKKNRVRYKKLISQLDIREK</sequence>
<comment type="subunit">
    <text evidence="1">Part of the 30S ribosomal subunit.</text>
</comment>
<comment type="subcellular location">
    <subcellularLocation>
        <location>Plastid</location>
        <location>Chloroplast</location>
    </subcellularLocation>
</comment>
<comment type="similarity">
    <text evidence="2">Belongs to the universal ribosomal protein uS15 family.</text>
</comment>